<feature type="chain" id="PRO_0000416976" description="3-keto-5-aminohexanoate cleavage enzyme">
    <location>
        <begin position="1"/>
        <end position="273"/>
    </location>
</feature>
<feature type="binding site" evidence="1">
    <location>
        <position position="14"/>
    </location>
    <ligand>
        <name>(5S)-5-amino-3-oxohexanoate</name>
        <dbReference type="ChEBI" id="CHEBI:58523"/>
    </ligand>
</feature>
<feature type="binding site" evidence="1">
    <location>
        <position position="46"/>
    </location>
    <ligand>
        <name>Zn(2+)</name>
        <dbReference type="ChEBI" id="CHEBI:29105"/>
    </ligand>
</feature>
<feature type="binding site" evidence="1">
    <location>
        <position position="48"/>
    </location>
    <ligand>
        <name>Zn(2+)</name>
        <dbReference type="ChEBI" id="CHEBI:29105"/>
    </ligand>
</feature>
<feature type="binding site" evidence="1">
    <location>
        <position position="82"/>
    </location>
    <ligand>
        <name>(5S)-5-amino-3-oxohexanoate</name>
        <dbReference type="ChEBI" id="CHEBI:58523"/>
    </ligand>
</feature>
<feature type="binding site" evidence="1">
    <location>
        <position position="85"/>
    </location>
    <ligand>
        <name>(5S)-5-amino-3-oxohexanoate</name>
        <dbReference type="ChEBI" id="CHEBI:58523"/>
    </ligand>
</feature>
<feature type="binding site" evidence="1">
    <location>
        <position position="106"/>
    </location>
    <ligand>
        <name>(5S)-5-amino-3-oxohexanoate</name>
        <dbReference type="ChEBI" id="CHEBI:58523"/>
    </ligand>
</feature>
<feature type="binding site" evidence="1">
    <location>
        <position position="227"/>
    </location>
    <ligand>
        <name>Zn(2+)</name>
        <dbReference type="ChEBI" id="CHEBI:29105"/>
    </ligand>
</feature>
<sequence>MEKLIITAAICGAEVTKEHNPNVPYTVEEIVREAKSAYDAGASVIHLHVREDDGTPTQSKERFKMCVDAIKEACPDAIIQPSTGGAVGMTDEERLQPVFLKPEMASLDCGTCNFGGDEIFVNTENMIINFSKYMIKNGVKPECEVFDKSMIDMAIRLAKKGHIQTPMHFNFVMGVNGGISATPRDLVFLIGSIPSESSFTVSAMGRNQFPMAAMAIITGGHVRVGFEDNVYIEKGVPAKSNGELVEKVVRLAKEFGRPVATPSEAREILGISK</sequence>
<comment type="function">
    <text evidence="1">Involved in the anaerobic fermentation of lysine. Catalyzes the reversible reaction between 3-keto-5-aminohexanoate (KAH) and acetyl-CoA to form 3-aminobutyryl-CoA and acetoacetate. The reaction involves the deprotonation of KAH, the nucleophilic addition onto acetyl-CoA and the intramolecular transfer of the CoA moiety.</text>
</comment>
<comment type="catalytic activity">
    <reaction evidence="1">
        <text>(5S)-5-amino-3-oxohexanoate + acetyl-CoA = (3S)-3-aminobutanoyl-CoA + acetoacetate</text>
        <dbReference type="Rhea" id="RHEA:31555"/>
        <dbReference type="ChEBI" id="CHEBI:13705"/>
        <dbReference type="ChEBI" id="CHEBI:57288"/>
        <dbReference type="ChEBI" id="CHEBI:57366"/>
        <dbReference type="ChEBI" id="CHEBI:58523"/>
        <dbReference type="EC" id="2.3.1.247"/>
    </reaction>
</comment>
<comment type="cofactor">
    <cofactor evidence="1">
        <name>Zn(2+)</name>
        <dbReference type="ChEBI" id="CHEBI:29105"/>
    </cofactor>
</comment>
<comment type="pathway">
    <text evidence="1">Amino-acid degradation; L-lysine degradation via acetate pathway.</text>
</comment>
<comment type="subunit">
    <text evidence="1">Homotetramer.</text>
</comment>
<comment type="similarity">
    <text evidence="2">Belongs to the BKACE family. Kce subfamily.</text>
</comment>
<protein>
    <recommendedName>
        <fullName evidence="1">3-keto-5-aminohexanoate cleavage enzyme</fullName>
        <ecNumber evidence="1">2.3.1.247</ecNumber>
    </recommendedName>
</protein>
<name>KCE_ACESD</name>
<reference key="1">
    <citation type="journal article" date="2010" name="BMC Genomics">
        <title>Clostridium sticklandii, a specialist in amino acid degradation:revisiting its metabolism through its genome sequence.</title>
        <authorList>
            <person name="Fonknechten N."/>
            <person name="Chaussonnerie S."/>
            <person name="Tricot S."/>
            <person name="Lajus A."/>
            <person name="Andreesen J.R."/>
            <person name="Perchat N."/>
            <person name="Pelletier E."/>
            <person name="Gouyvenoux M."/>
            <person name="Barbe V."/>
            <person name="Salanoubat M."/>
            <person name="Le Paslier D."/>
            <person name="Weissenbach J."/>
            <person name="Cohen G.N."/>
            <person name="Kreimeyer A."/>
        </authorList>
    </citation>
    <scope>NUCLEOTIDE SEQUENCE [LARGE SCALE GENOMIC DNA]</scope>
    <source>
        <strain>ATCC 12662 / DSM 519 / JCM 1433 / CCUG 9281 / NCIMB 10654 / HF</strain>
    </source>
</reference>
<gene>
    <name evidence="1" type="primary">kce</name>
    <name type="ordered locus">CLOST_1384</name>
</gene>
<proteinExistence type="inferred from homology"/>
<accession>E3PRK0</accession>
<dbReference type="EC" id="2.3.1.247" evidence="1"/>
<dbReference type="EMBL" id="FP565809">
    <property type="protein sequence ID" value="CBH21504.1"/>
    <property type="molecule type" value="Genomic_DNA"/>
</dbReference>
<dbReference type="SMR" id="E3PRK0"/>
<dbReference type="STRING" id="1511.CLOST_1384"/>
<dbReference type="KEGG" id="cst:CLOST_1384"/>
<dbReference type="eggNOG" id="COG3246">
    <property type="taxonomic scope" value="Bacteria"/>
</dbReference>
<dbReference type="HOGENOM" id="CLU_065536_2_0_9"/>
<dbReference type="UniPathway" id="UPA00870"/>
<dbReference type="Proteomes" id="UP000007041">
    <property type="component" value="Chromosome"/>
</dbReference>
<dbReference type="GO" id="GO:0043720">
    <property type="term" value="F:3-keto-5-aminohexanoate cleavage activity"/>
    <property type="evidence" value="ECO:0007669"/>
    <property type="project" value="InterPro"/>
</dbReference>
<dbReference type="GO" id="GO:0046872">
    <property type="term" value="F:metal ion binding"/>
    <property type="evidence" value="ECO:0007669"/>
    <property type="project" value="UniProtKB-KW"/>
</dbReference>
<dbReference type="GO" id="GO:0019475">
    <property type="term" value="P:L-lysine catabolic process to acetate"/>
    <property type="evidence" value="ECO:0007669"/>
    <property type="project" value="UniProtKB-UniPathway"/>
</dbReference>
<dbReference type="Gene3D" id="3.20.20.70">
    <property type="entry name" value="Aldolase class I"/>
    <property type="match status" value="1"/>
</dbReference>
<dbReference type="InterPro" id="IPR013785">
    <property type="entry name" value="Aldolase_TIM"/>
</dbReference>
<dbReference type="InterPro" id="IPR008567">
    <property type="entry name" value="BKACE"/>
</dbReference>
<dbReference type="PANTHER" id="PTHR37418:SF2">
    <property type="entry name" value="3-KETO-5-AMINOHEXANOATE CLEAVAGE ENZYME"/>
    <property type="match status" value="1"/>
</dbReference>
<dbReference type="PANTHER" id="PTHR37418">
    <property type="entry name" value="3-KETO-5-AMINOHEXANOATE CLEAVAGE ENZYME-RELATED"/>
    <property type="match status" value="1"/>
</dbReference>
<dbReference type="Pfam" id="PF05853">
    <property type="entry name" value="BKACE"/>
    <property type="match status" value="1"/>
</dbReference>
<evidence type="ECO:0000250" key="1">
    <source>
        <dbReference type="UniProtKB" id="B0VHH0"/>
    </source>
</evidence>
<evidence type="ECO:0000305" key="2"/>
<keyword id="KW-0479">Metal-binding</keyword>
<keyword id="KW-1185">Reference proteome</keyword>
<keyword id="KW-0808">Transferase</keyword>
<keyword id="KW-0862">Zinc</keyword>
<organism>
    <name type="scientific">Acetoanaerobium sticklandii (strain ATCC 12662 / DSM 519 / JCM 1433 / CCUG 9281 / NCIMB 10654 / HF)</name>
    <name type="common">Clostridium sticklandii</name>
    <dbReference type="NCBI Taxonomy" id="499177"/>
    <lineage>
        <taxon>Bacteria</taxon>
        <taxon>Bacillati</taxon>
        <taxon>Bacillota</taxon>
        <taxon>Clostridia</taxon>
        <taxon>Peptostreptococcales</taxon>
        <taxon>Filifactoraceae</taxon>
        <taxon>Acetoanaerobium</taxon>
    </lineage>
</organism>